<evidence type="ECO:0000255" key="1">
    <source>
        <dbReference type="HAMAP-Rule" id="MF_00440"/>
    </source>
</evidence>
<protein>
    <recommendedName>
        <fullName evidence="1">Transcriptional repressor NrdR</fullName>
    </recommendedName>
</protein>
<feature type="chain" id="PRO_0000182323" description="Transcriptional repressor NrdR">
    <location>
        <begin position="1"/>
        <end position="154"/>
    </location>
</feature>
<feature type="domain" description="ATP-cone" evidence="1">
    <location>
        <begin position="49"/>
        <end position="139"/>
    </location>
</feature>
<feature type="zinc finger region" evidence="1">
    <location>
        <begin position="3"/>
        <end position="34"/>
    </location>
</feature>
<dbReference type="EMBL" id="AE002098">
    <property type="protein sequence ID" value="AAF42151.1"/>
    <property type="molecule type" value="Genomic_DNA"/>
</dbReference>
<dbReference type="PIR" id="A81039">
    <property type="entry name" value="A81039"/>
</dbReference>
<dbReference type="RefSeq" id="NP_274813.1">
    <property type="nucleotide sequence ID" value="NC_003112.2"/>
</dbReference>
<dbReference type="RefSeq" id="WP_002217912.1">
    <property type="nucleotide sequence ID" value="NC_003112.2"/>
</dbReference>
<dbReference type="SMR" id="Q9JXZ9"/>
<dbReference type="FunCoup" id="Q9JXZ9">
    <property type="interactions" value="239"/>
</dbReference>
<dbReference type="STRING" id="122586.NMB1816"/>
<dbReference type="PaxDb" id="122586-NMB1816"/>
<dbReference type="KEGG" id="nme:NMB1816"/>
<dbReference type="PATRIC" id="fig|122586.8.peg.2314"/>
<dbReference type="HOGENOM" id="CLU_108412_0_1_4"/>
<dbReference type="InParanoid" id="Q9JXZ9"/>
<dbReference type="OrthoDB" id="9807461at2"/>
<dbReference type="Proteomes" id="UP000000425">
    <property type="component" value="Chromosome"/>
</dbReference>
<dbReference type="GO" id="GO:0005524">
    <property type="term" value="F:ATP binding"/>
    <property type="evidence" value="ECO:0007669"/>
    <property type="project" value="UniProtKB-KW"/>
</dbReference>
<dbReference type="GO" id="GO:0003690">
    <property type="term" value="F:double-stranded DNA binding"/>
    <property type="evidence" value="ECO:0000318"/>
    <property type="project" value="GO_Central"/>
</dbReference>
<dbReference type="GO" id="GO:0008270">
    <property type="term" value="F:zinc ion binding"/>
    <property type="evidence" value="ECO:0007669"/>
    <property type="project" value="UniProtKB-UniRule"/>
</dbReference>
<dbReference type="GO" id="GO:0045892">
    <property type="term" value="P:negative regulation of DNA-templated transcription"/>
    <property type="evidence" value="ECO:0000318"/>
    <property type="project" value="GO_Central"/>
</dbReference>
<dbReference type="HAMAP" id="MF_00440">
    <property type="entry name" value="NrdR"/>
    <property type="match status" value="1"/>
</dbReference>
<dbReference type="InterPro" id="IPR005144">
    <property type="entry name" value="ATP-cone_dom"/>
</dbReference>
<dbReference type="InterPro" id="IPR055173">
    <property type="entry name" value="NrdR-like_N"/>
</dbReference>
<dbReference type="InterPro" id="IPR003796">
    <property type="entry name" value="RNR_NrdR-like"/>
</dbReference>
<dbReference type="NCBIfam" id="TIGR00244">
    <property type="entry name" value="transcriptional regulator NrdR"/>
    <property type="match status" value="1"/>
</dbReference>
<dbReference type="PANTHER" id="PTHR30455">
    <property type="entry name" value="TRANSCRIPTIONAL REPRESSOR NRDR"/>
    <property type="match status" value="1"/>
</dbReference>
<dbReference type="PANTHER" id="PTHR30455:SF2">
    <property type="entry name" value="TRANSCRIPTIONAL REPRESSOR NRDR"/>
    <property type="match status" value="1"/>
</dbReference>
<dbReference type="Pfam" id="PF03477">
    <property type="entry name" value="ATP-cone"/>
    <property type="match status" value="1"/>
</dbReference>
<dbReference type="Pfam" id="PF22811">
    <property type="entry name" value="Zn_ribbon_NrdR"/>
    <property type="match status" value="1"/>
</dbReference>
<dbReference type="PROSITE" id="PS51161">
    <property type="entry name" value="ATP_CONE"/>
    <property type="match status" value="1"/>
</dbReference>
<reference key="1">
    <citation type="journal article" date="2000" name="Science">
        <title>Complete genome sequence of Neisseria meningitidis serogroup B strain MC58.</title>
        <authorList>
            <person name="Tettelin H."/>
            <person name="Saunders N.J."/>
            <person name="Heidelberg J.F."/>
            <person name="Jeffries A.C."/>
            <person name="Nelson K.E."/>
            <person name="Eisen J.A."/>
            <person name="Ketchum K.A."/>
            <person name="Hood D.W."/>
            <person name="Peden J.F."/>
            <person name="Dodson R.J."/>
            <person name="Nelson W.C."/>
            <person name="Gwinn M.L."/>
            <person name="DeBoy R.T."/>
            <person name="Peterson J.D."/>
            <person name="Hickey E.K."/>
            <person name="Haft D.H."/>
            <person name="Salzberg S.L."/>
            <person name="White O."/>
            <person name="Fleischmann R.D."/>
            <person name="Dougherty B.A."/>
            <person name="Mason T.M."/>
            <person name="Ciecko A."/>
            <person name="Parksey D.S."/>
            <person name="Blair E."/>
            <person name="Cittone H."/>
            <person name="Clark E.B."/>
            <person name="Cotton M.D."/>
            <person name="Utterback T.R."/>
            <person name="Khouri H.M."/>
            <person name="Qin H."/>
            <person name="Vamathevan J.J."/>
            <person name="Gill J."/>
            <person name="Scarlato V."/>
            <person name="Masignani V."/>
            <person name="Pizza M."/>
            <person name="Grandi G."/>
            <person name="Sun L."/>
            <person name="Smith H.O."/>
            <person name="Fraser C.M."/>
            <person name="Moxon E.R."/>
            <person name="Rappuoli R."/>
            <person name="Venter J.C."/>
        </authorList>
    </citation>
    <scope>NUCLEOTIDE SEQUENCE [LARGE SCALE GENOMIC DNA]</scope>
    <source>
        <strain>ATCC BAA-335 / MC58</strain>
    </source>
</reference>
<proteinExistence type="inferred from homology"/>
<organism>
    <name type="scientific">Neisseria meningitidis serogroup B (strain ATCC BAA-335 / MC58)</name>
    <dbReference type="NCBI Taxonomy" id="122586"/>
    <lineage>
        <taxon>Bacteria</taxon>
        <taxon>Pseudomonadati</taxon>
        <taxon>Pseudomonadota</taxon>
        <taxon>Betaproteobacteria</taxon>
        <taxon>Neisseriales</taxon>
        <taxon>Neisseriaceae</taxon>
        <taxon>Neisseria</taxon>
    </lineage>
</organism>
<comment type="function">
    <text evidence="1">Negatively regulates transcription of bacterial ribonucleotide reductase nrd genes and operons by binding to NrdR-boxes.</text>
</comment>
<comment type="cofactor">
    <cofactor evidence="1">
        <name>Zn(2+)</name>
        <dbReference type="ChEBI" id="CHEBI:29105"/>
    </cofactor>
    <text evidence="1">Binds 1 zinc ion.</text>
</comment>
<comment type="similarity">
    <text evidence="1">Belongs to the NrdR family.</text>
</comment>
<sequence length="154" mass="17285">MKCPFCAHPDTRVADSRLMEERNAVRRRRHCPNCGKRFGTLETAELKMPAVIGPDKKRSPFNAQRLRNDLTAAARKSALTPEQIDETVRLTEHRLYTSGQRDIPSAALADMVLKELLRQDTEAAVRFAALHKRFDNPADFASWLAQAVKTGGKA</sequence>
<name>NRDR_NEIMB</name>
<keyword id="KW-0067">ATP-binding</keyword>
<keyword id="KW-0238">DNA-binding</keyword>
<keyword id="KW-0479">Metal-binding</keyword>
<keyword id="KW-0547">Nucleotide-binding</keyword>
<keyword id="KW-1185">Reference proteome</keyword>
<keyword id="KW-0678">Repressor</keyword>
<keyword id="KW-0804">Transcription</keyword>
<keyword id="KW-0805">Transcription regulation</keyword>
<keyword id="KW-0862">Zinc</keyword>
<keyword id="KW-0863">Zinc-finger</keyword>
<gene>
    <name evidence="1" type="primary">nrdR</name>
    <name type="ordered locus">NMB1816</name>
</gene>
<accession>Q9JXZ9</accession>